<organism>
    <name type="scientific">Escherichia coli (strain K12)</name>
    <dbReference type="NCBI Taxonomy" id="83333"/>
    <lineage>
        <taxon>Bacteria</taxon>
        <taxon>Pseudomonadati</taxon>
        <taxon>Pseudomonadota</taxon>
        <taxon>Gammaproteobacteria</taxon>
        <taxon>Enterobacterales</taxon>
        <taxon>Enterobacteriaceae</taxon>
        <taxon>Escherichia</taxon>
    </lineage>
</organism>
<keyword id="KW-0963">Cytoplasm</keyword>
<keyword id="KW-0418">Kinase</keyword>
<keyword id="KW-0597">Phosphoprotein</keyword>
<keyword id="KW-0598">Phosphotransferase system</keyword>
<keyword id="KW-1185">Reference proteome</keyword>
<keyword id="KW-0762">Sugar transport</keyword>
<keyword id="KW-0808">Transferase</keyword>
<keyword id="KW-0813">Transport</keyword>
<accession>P69816</accession>
<accession>P32673</accession>
<accession>Q2M8P5</accession>
<reference key="1">
    <citation type="journal article" date="1993" name="Nucleic Acids Res.">
        <title>Analysis of the Escherichia coli genome. IV. DNA sequence of the region from 89.2 to 92.8 minutes.</title>
        <authorList>
            <person name="Blattner F.R."/>
            <person name="Burland V.D."/>
            <person name="Plunkett G. III"/>
            <person name="Sofia H.J."/>
            <person name="Daniels D.L."/>
        </authorList>
    </citation>
    <scope>NUCLEOTIDE SEQUENCE [LARGE SCALE GENOMIC DNA]</scope>
    <source>
        <strain>K12 / MG1655 / ATCC 47076</strain>
    </source>
</reference>
<reference key="2">
    <citation type="journal article" date="1997" name="Science">
        <title>The complete genome sequence of Escherichia coli K-12.</title>
        <authorList>
            <person name="Blattner F.R."/>
            <person name="Plunkett G. III"/>
            <person name="Bloch C.A."/>
            <person name="Perna N.T."/>
            <person name="Burland V."/>
            <person name="Riley M."/>
            <person name="Collado-Vides J."/>
            <person name="Glasner J.D."/>
            <person name="Rode C.K."/>
            <person name="Mayhew G.F."/>
            <person name="Gregor J."/>
            <person name="Davis N.W."/>
            <person name="Kirkpatrick H.A."/>
            <person name="Goeden M.A."/>
            <person name="Rose D.J."/>
            <person name="Mau B."/>
            <person name="Shao Y."/>
        </authorList>
    </citation>
    <scope>NUCLEOTIDE SEQUENCE [LARGE SCALE GENOMIC DNA]</scope>
    <source>
        <strain>K12 / MG1655 / ATCC 47076</strain>
    </source>
</reference>
<reference key="3">
    <citation type="journal article" date="2006" name="Mol. Syst. Biol.">
        <title>Highly accurate genome sequences of Escherichia coli K-12 strains MG1655 and W3110.</title>
        <authorList>
            <person name="Hayashi K."/>
            <person name="Morooka N."/>
            <person name="Yamamoto Y."/>
            <person name="Fujita K."/>
            <person name="Isono K."/>
            <person name="Choi S."/>
            <person name="Ohtsubo E."/>
            <person name="Baba T."/>
            <person name="Wanner B.L."/>
            <person name="Mori H."/>
            <person name="Horiuchi T."/>
        </authorList>
    </citation>
    <scope>NUCLEOTIDE SEQUENCE [LARGE SCALE GENOMIC DNA]</scope>
    <source>
        <strain>K12 / W3110 / ATCC 27325 / DSM 5911</strain>
    </source>
</reference>
<reference key="4">
    <citation type="journal article" date="1995" name="Microbiology">
        <title>Novel phosphotransferase system genes revealed by bacterial genome analysis -- a gene cluster encoding a unique Enzyme I and the proteins of a fructose-like permease system.</title>
        <authorList>
            <person name="Reizer J."/>
            <person name="Reizer A."/>
            <person name="Saier M.H. Jr."/>
        </authorList>
    </citation>
    <scope>FUNCTION</scope>
    <scope>DISCUSSION OF SEQUENCE</scope>
</reference>
<proteinExistence type="inferred from homology"/>
<name>PTFB2_ECOLI</name>
<protein>
    <recommendedName>
        <fullName evidence="1">PTS system fructose-like EIIB component 2</fullName>
        <ecNumber evidence="1">2.7.1.202</ecNumber>
    </recommendedName>
    <alternativeName>
        <fullName evidence="1">Fructose-like phosphotransferase enzyme IIB component 2</fullName>
    </alternativeName>
</protein>
<comment type="function">
    <text evidence="1 4">The phosphoenolpyruvate-dependent sugar phosphotransferase system (sugar PTS), a major carbohydrate active transport system, catalyzes the phosphorylation of incoming sugar substrates concomitantly with their translocation across the cell membrane. The enzyme II FrwABC PTS system is involved in fructose transport.</text>
</comment>
<comment type="catalytic activity">
    <reaction evidence="1">
        <text>D-fructose(out) + N(pros)-phospho-L-histidyl-[protein] = D-fructose 1-phosphate(in) + L-histidyl-[protein]</text>
        <dbReference type="Rhea" id="RHEA:49252"/>
        <dbReference type="Rhea" id="RHEA-COMP:9745"/>
        <dbReference type="Rhea" id="RHEA-COMP:9746"/>
        <dbReference type="ChEBI" id="CHEBI:29979"/>
        <dbReference type="ChEBI" id="CHEBI:37721"/>
        <dbReference type="ChEBI" id="CHEBI:58674"/>
        <dbReference type="ChEBI" id="CHEBI:64837"/>
        <dbReference type="EC" id="2.7.1.202"/>
    </reaction>
</comment>
<comment type="subcellular location">
    <subcellularLocation>
        <location evidence="3">Cytoplasm</location>
    </subcellularLocation>
</comment>
<comment type="domain">
    <text evidence="2">The PTS EIIB type-2 domain is phosphorylated by phospho-EIIA on a cysteinyl residue. Then, it transfers the phosphoryl group to the sugar substrate concomitantly with the sugar uptake processed by the PTS EIIC type-2 domain.</text>
</comment>
<feature type="chain" id="PRO_0000186501" description="PTS system fructose-like EIIB component 2">
    <location>
        <begin position="1"/>
        <end position="106"/>
    </location>
</feature>
<feature type="domain" description="PTS EIIB type-2" evidence="2">
    <location>
        <begin position="1"/>
        <end position="103"/>
    </location>
</feature>
<feature type="active site" description="Phosphocysteine intermediate" evidence="1 3">
    <location>
        <position position="10"/>
    </location>
</feature>
<feature type="modified residue" description="Phosphocysteine; by EIIA" evidence="2">
    <location>
        <position position="10"/>
    </location>
</feature>
<evidence type="ECO:0000250" key="1">
    <source>
        <dbReference type="UniProtKB" id="P20966"/>
    </source>
</evidence>
<evidence type="ECO:0000255" key="2">
    <source>
        <dbReference type="PROSITE-ProRule" id="PRU00422"/>
    </source>
</evidence>
<evidence type="ECO:0000305" key="3"/>
<evidence type="ECO:0000305" key="4">
    <source>
    </source>
</evidence>
<dbReference type="EC" id="2.7.1.202" evidence="1"/>
<dbReference type="EMBL" id="U00006">
    <property type="protein sequence ID" value="AAC43056.1"/>
    <property type="molecule type" value="Genomic_DNA"/>
</dbReference>
<dbReference type="EMBL" id="U00096">
    <property type="protein sequence ID" value="AAC76932.1"/>
    <property type="molecule type" value="Genomic_DNA"/>
</dbReference>
<dbReference type="EMBL" id="AP009048">
    <property type="protein sequence ID" value="BAE77361.1"/>
    <property type="molecule type" value="Genomic_DNA"/>
</dbReference>
<dbReference type="PIR" id="A65202">
    <property type="entry name" value="A65202"/>
</dbReference>
<dbReference type="RefSeq" id="NP_418385.1">
    <property type="nucleotide sequence ID" value="NC_000913.3"/>
</dbReference>
<dbReference type="RefSeq" id="WP_000161265.1">
    <property type="nucleotide sequence ID" value="NZ_STEB01000037.1"/>
</dbReference>
<dbReference type="SMR" id="P69816"/>
<dbReference type="BioGRID" id="4262059">
    <property type="interactions" value="14"/>
</dbReference>
<dbReference type="BioGRID" id="852744">
    <property type="interactions" value="3"/>
</dbReference>
<dbReference type="ComplexPortal" id="CPX-5994">
    <property type="entry name" value="Frw fuctose-like enzyme II complex"/>
</dbReference>
<dbReference type="FunCoup" id="P69816">
    <property type="interactions" value="150"/>
</dbReference>
<dbReference type="IntAct" id="P69816">
    <property type="interactions" value="4"/>
</dbReference>
<dbReference type="STRING" id="511145.b3950"/>
<dbReference type="TCDB" id="4.A.2.1.10">
    <property type="family name" value="the pts fructose-mannitol (fru) family"/>
</dbReference>
<dbReference type="PaxDb" id="511145-b3950"/>
<dbReference type="EnsemblBacteria" id="AAC76932">
    <property type="protein sequence ID" value="AAC76932"/>
    <property type="gene ID" value="b3950"/>
</dbReference>
<dbReference type="GeneID" id="948447"/>
<dbReference type="KEGG" id="ecj:JW3922"/>
<dbReference type="KEGG" id="eco:b3950"/>
<dbReference type="KEGG" id="ecoc:C3026_21345"/>
<dbReference type="PATRIC" id="fig|1411691.4.peg.2755"/>
<dbReference type="EchoBASE" id="EB1853"/>
<dbReference type="eggNOG" id="COG1445">
    <property type="taxonomic scope" value="Bacteria"/>
</dbReference>
<dbReference type="HOGENOM" id="CLU_013155_2_1_6"/>
<dbReference type="InParanoid" id="P69816"/>
<dbReference type="OMA" id="TPHDIAQ"/>
<dbReference type="OrthoDB" id="9782569at2"/>
<dbReference type="PhylomeDB" id="P69816"/>
<dbReference type="BioCyc" id="EcoCyc:FRWB-MONOMER"/>
<dbReference type="BioCyc" id="MetaCyc:FRWB-MONOMER"/>
<dbReference type="PRO" id="PR:P69816"/>
<dbReference type="Proteomes" id="UP000000625">
    <property type="component" value="Chromosome"/>
</dbReference>
<dbReference type="GO" id="GO:0005737">
    <property type="term" value="C:cytoplasm"/>
    <property type="evidence" value="ECO:0007669"/>
    <property type="project" value="UniProtKB-SubCell"/>
</dbReference>
<dbReference type="GO" id="GO:1902495">
    <property type="term" value="C:transmembrane transporter complex"/>
    <property type="evidence" value="ECO:0000303"/>
    <property type="project" value="ComplexPortal"/>
</dbReference>
<dbReference type="GO" id="GO:0016301">
    <property type="term" value="F:kinase activity"/>
    <property type="evidence" value="ECO:0007669"/>
    <property type="project" value="UniProtKB-KW"/>
</dbReference>
<dbReference type="GO" id="GO:0022877">
    <property type="term" value="F:protein-N(PI)-phosphohistidine-fructose phosphotransferase system transporter activity"/>
    <property type="evidence" value="ECO:0007669"/>
    <property type="project" value="InterPro"/>
</dbReference>
<dbReference type="GO" id="GO:0090582">
    <property type="term" value="F:protein-phosphocysteine-D-fructose-phosphotransferase system transporter activity"/>
    <property type="evidence" value="ECO:0000250"/>
    <property type="project" value="UniProtKB"/>
</dbReference>
<dbReference type="GO" id="GO:1990539">
    <property type="term" value="P:fructose import across plasma membrane"/>
    <property type="evidence" value="ECO:0000303"/>
    <property type="project" value="ComplexPortal"/>
</dbReference>
<dbReference type="GO" id="GO:0009401">
    <property type="term" value="P:phosphoenolpyruvate-dependent sugar phosphotransferase system"/>
    <property type="evidence" value="ECO:0000250"/>
    <property type="project" value="UniProtKB"/>
</dbReference>
<dbReference type="CDD" id="cd05569">
    <property type="entry name" value="PTS_IIB_fructose"/>
    <property type="match status" value="1"/>
</dbReference>
<dbReference type="FunFam" id="3.40.50.2300:FF:000014">
    <property type="entry name" value="PTS system fructose-like transporter subunit IIB"/>
    <property type="match status" value="1"/>
</dbReference>
<dbReference type="Gene3D" id="3.40.50.2300">
    <property type="match status" value="1"/>
</dbReference>
<dbReference type="InterPro" id="IPR050864">
    <property type="entry name" value="Bacterial_PTS_Sugar_Transport"/>
</dbReference>
<dbReference type="InterPro" id="IPR036095">
    <property type="entry name" value="PTS_EIIB-like_sf"/>
</dbReference>
<dbReference type="InterPro" id="IPR013011">
    <property type="entry name" value="PTS_EIIB_2"/>
</dbReference>
<dbReference type="InterPro" id="IPR003501">
    <property type="entry name" value="PTS_EIIB_2/3"/>
</dbReference>
<dbReference type="InterPro" id="IPR003353">
    <property type="entry name" value="PTS_IIB_fruc"/>
</dbReference>
<dbReference type="NCBIfam" id="TIGR00829">
    <property type="entry name" value="FRU"/>
    <property type="match status" value="1"/>
</dbReference>
<dbReference type="NCBIfam" id="NF007783">
    <property type="entry name" value="PRK10474.1"/>
    <property type="match status" value="1"/>
</dbReference>
<dbReference type="PANTHER" id="PTHR30505">
    <property type="entry name" value="FRUCTOSE-LIKE PERMEASE"/>
    <property type="match status" value="1"/>
</dbReference>
<dbReference type="PANTHER" id="PTHR30505:SF0">
    <property type="entry name" value="FRUCTOSE-LIKE PTS SYSTEM EIIBC COMPONENT-RELATED"/>
    <property type="match status" value="1"/>
</dbReference>
<dbReference type="Pfam" id="PF02302">
    <property type="entry name" value="PTS_IIB"/>
    <property type="match status" value="1"/>
</dbReference>
<dbReference type="SUPFAM" id="SSF52794">
    <property type="entry name" value="PTS system IIB component-like"/>
    <property type="match status" value="1"/>
</dbReference>
<dbReference type="PROSITE" id="PS51099">
    <property type="entry name" value="PTS_EIIB_TYPE_2"/>
    <property type="match status" value="1"/>
</dbReference>
<sequence length="106" mass="11248">MTKIIAVTACPSGVAHTYMAAEALESAAKAKGWEVKVETQGSIGLENELTAEDVASADMVILTKDIGIKFEERFAGKTIVRVNISDAVKRADAIMSKIEAHLAQTA</sequence>
<gene>
    <name type="primary">frwB</name>
    <name type="synonym">yijK</name>
    <name type="ordered locus">b3950</name>
    <name type="ordered locus">JW3922</name>
</gene>